<accession>O32116</accession>
<proteinExistence type="inferred from homology"/>
<comment type="similarity">
    <text evidence="1">Belongs to the UPF0349 family.</text>
</comment>
<dbReference type="EMBL" id="AL009126">
    <property type="protein sequence ID" value="CAB15209.1"/>
    <property type="molecule type" value="Genomic_DNA"/>
</dbReference>
<dbReference type="PIR" id="A70026">
    <property type="entry name" value="A70026"/>
</dbReference>
<dbReference type="RefSeq" id="NP_391099.1">
    <property type="nucleotide sequence ID" value="NC_000964.3"/>
</dbReference>
<dbReference type="RefSeq" id="WP_003222913.1">
    <property type="nucleotide sequence ID" value="NZ_OZ025638.1"/>
</dbReference>
<dbReference type="SMR" id="O32116"/>
<dbReference type="FunCoup" id="O32116">
    <property type="interactions" value="1"/>
</dbReference>
<dbReference type="STRING" id="224308.BSU32190"/>
<dbReference type="PaxDb" id="224308-BSU32190"/>
<dbReference type="DNASU" id="936585"/>
<dbReference type="EnsemblBacteria" id="CAB15209">
    <property type="protein sequence ID" value="CAB15209"/>
    <property type="gene ID" value="BSU_32190"/>
</dbReference>
<dbReference type="GeneID" id="936585"/>
<dbReference type="KEGG" id="bsu:BSU32190"/>
<dbReference type="PATRIC" id="fig|224308.179.peg.3485"/>
<dbReference type="eggNOG" id="COG4844">
    <property type="taxonomic scope" value="Bacteria"/>
</dbReference>
<dbReference type="InParanoid" id="O32116"/>
<dbReference type="OrthoDB" id="1684419at2"/>
<dbReference type="PhylomeDB" id="O32116"/>
<dbReference type="BioCyc" id="BSUB:BSU32190-MONOMER"/>
<dbReference type="PRO" id="PR:O32116"/>
<dbReference type="Proteomes" id="UP000001570">
    <property type="component" value="Chromosome"/>
</dbReference>
<dbReference type="HAMAP" id="MF_01542">
    <property type="entry name" value="UPF0349"/>
    <property type="match status" value="1"/>
</dbReference>
<dbReference type="InterPro" id="IPR009910">
    <property type="entry name" value="DUF1450"/>
</dbReference>
<dbReference type="InterPro" id="IPR022916">
    <property type="entry name" value="UPF0349"/>
</dbReference>
<dbReference type="NCBIfam" id="NF010190">
    <property type="entry name" value="PRK13669.1"/>
    <property type="match status" value="1"/>
</dbReference>
<dbReference type="Pfam" id="PF07293">
    <property type="entry name" value="DUF1450"/>
    <property type="match status" value="1"/>
</dbReference>
<sequence length="78" mass="8683">MNPMIEFCVSNLAHGSQEARAILEKDPNLDVLEYGCLSYCGTCMESLFALVNGEVVMGETPAELVENIYTFIEENPMF</sequence>
<feature type="chain" id="PRO_0000165889" description="UPF0349 protein YuzB">
    <location>
        <begin position="1"/>
        <end position="78"/>
    </location>
</feature>
<name>YUZB_BACSU</name>
<keyword id="KW-1185">Reference proteome</keyword>
<evidence type="ECO:0000305" key="1"/>
<gene>
    <name type="primary">yuzB</name>
    <name type="ordered locus">BSU32190</name>
</gene>
<reference key="1">
    <citation type="journal article" date="1997" name="Nature">
        <title>The complete genome sequence of the Gram-positive bacterium Bacillus subtilis.</title>
        <authorList>
            <person name="Kunst F."/>
            <person name="Ogasawara N."/>
            <person name="Moszer I."/>
            <person name="Albertini A.M."/>
            <person name="Alloni G."/>
            <person name="Azevedo V."/>
            <person name="Bertero M.G."/>
            <person name="Bessieres P."/>
            <person name="Bolotin A."/>
            <person name="Borchert S."/>
            <person name="Borriss R."/>
            <person name="Boursier L."/>
            <person name="Brans A."/>
            <person name="Braun M."/>
            <person name="Brignell S.C."/>
            <person name="Bron S."/>
            <person name="Brouillet S."/>
            <person name="Bruschi C.V."/>
            <person name="Caldwell B."/>
            <person name="Capuano V."/>
            <person name="Carter N.M."/>
            <person name="Choi S.-K."/>
            <person name="Codani J.-J."/>
            <person name="Connerton I.F."/>
            <person name="Cummings N.J."/>
            <person name="Daniel R.A."/>
            <person name="Denizot F."/>
            <person name="Devine K.M."/>
            <person name="Duesterhoeft A."/>
            <person name="Ehrlich S.D."/>
            <person name="Emmerson P.T."/>
            <person name="Entian K.-D."/>
            <person name="Errington J."/>
            <person name="Fabret C."/>
            <person name="Ferrari E."/>
            <person name="Foulger D."/>
            <person name="Fritz C."/>
            <person name="Fujita M."/>
            <person name="Fujita Y."/>
            <person name="Fuma S."/>
            <person name="Galizzi A."/>
            <person name="Galleron N."/>
            <person name="Ghim S.-Y."/>
            <person name="Glaser P."/>
            <person name="Goffeau A."/>
            <person name="Golightly E.J."/>
            <person name="Grandi G."/>
            <person name="Guiseppi G."/>
            <person name="Guy B.J."/>
            <person name="Haga K."/>
            <person name="Haiech J."/>
            <person name="Harwood C.R."/>
            <person name="Henaut A."/>
            <person name="Hilbert H."/>
            <person name="Holsappel S."/>
            <person name="Hosono S."/>
            <person name="Hullo M.-F."/>
            <person name="Itaya M."/>
            <person name="Jones L.-M."/>
            <person name="Joris B."/>
            <person name="Karamata D."/>
            <person name="Kasahara Y."/>
            <person name="Klaerr-Blanchard M."/>
            <person name="Klein C."/>
            <person name="Kobayashi Y."/>
            <person name="Koetter P."/>
            <person name="Koningstein G."/>
            <person name="Krogh S."/>
            <person name="Kumano M."/>
            <person name="Kurita K."/>
            <person name="Lapidus A."/>
            <person name="Lardinois S."/>
            <person name="Lauber J."/>
            <person name="Lazarevic V."/>
            <person name="Lee S.-M."/>
            <person name="Levine A."/>
            <person name="Liu H."/>
            <person name="Masuda S."/>
            <person name="Mauel C."/>
            <person name="Medigue C."/>
            <person name="Medina N."/>
            <person name="Mellado R.P."/>
            <person name="Mizuno M."/>
            <person name="Moestl D."/>
            <person name="Nakai S."/>
            <person name="Noback M."/>
            <person name="Noone D."/>
            <person name="O'Reilly M."/>
            <person name="Ogawa K."/>
            <person name="Ogiwara A."/>
            <person name="Oudega B."/>
            <person name="Park S.-H."/>
            <person name="Parro V."/>
            <person name="Pohl T.M."/>
            <person name="Portetelle D."/>
            <person name="Porwollik S."/>
            <person name="Prescott A.M."/>
            <person name="Presecan E."/>
            <person name="Pujic P."/>
            <person name="Purnelle B."/>
            <person name="Rapoport G."/>
            <person name="Rey M."/>
            <person name="Reynolds S."/>
            <person name="Rieger M."/>
            <person name="Rivolta C."/>
            <person name="Rocha E."/>
            <person name="Roche B."/>
            <person name="Rose M."/>
            <person name="Sadaie Y."/>
            <person name="Sato T."/>
            <person name="Scanlan E."/>
            <person name="Schleich S."/>
            <person name="Schroeter R."/>
            <person name="Scoffone F."/>
            <person name="Sekiguchi J."/>
            <person name="Sekowska A."/>
            <person name="Seror S.J."/>
            <person name="Serror P."/>
            <person name="Shin B.-S."/>
            <person name="Soldo B."/>
            <person name="Sorokin A."/>
            <person name="Tacconi E."/>
            <person name="Takagi T."/>
            <person name="Takahashi H."/>
            <person name="Takemaru K."/>
            <person name="Takeuchi M."/>
            <person name="Tamakoshi A."/>
            <person name="Tanaka T."/>
            <person name="Terpstra P."/>
            <person name="Tognoni A."/>
            <person name="Tosato V."/>
            <person name="Uchiyama S."/>
            <person name="Vandenbol M."/>
            <person name="Vannier F."/>
            <person name="Vassarotti A."/>
            <person name="Viari A."/>
            <person name="Wambutt R."/>
            <person name="Wedler E."/>
            <person name="Wedler H."/>
            <person name="Weitzenegger T."/>
            <person name="Winters P."/>
            <person name="Wipat A."/>
            <person name="Yamamoto H."/>
            <person name="Yamane K."/>
            <person name="Yasumoto K."/>
            <person name="Yata K."/>
            <person name="Yoshida K."/>
            <person name="Yoshikawa H.-F."/>
            <person name="Zumstein E."/>
            <person name="Yoshikawa H."/>
            <person name="Danchin A."/>
        </authorList>
    </citation>
    <scope>NUCLEOTIDE SEQUENCE [LARGE SCALE GENOMIC DNA]</scope>
    <source>
        <strain>168</strain>
    </source>
</reference>
<protein>
    <recommendedName>
        <fullName>UPF0349 protein YuzB</fullName>
    </recommendedName>
</protein>
<organism>
    <name type="scientific">Bacillus subtilis (strain 168)</name>
    <dbReference type="NCBI Taxonomy" id="224308"/>
    <lineage>
        <taxon>Bacteria</taxon>
        <taxon>Bacillati</taxon>
        <taxon>Bacillota</taxon>
        <taxon>Bacilli</taxon>
        <taxon>Bacillales</taxon>
        <taxon>Bacillaceae</taxon>
        <taxon>Bacillus</taxon>
    </lineage>
</organism>